<keyword id="KW-0002">3D-structure</keyword>
<keyword id="KW-0167">Capsid protein</keyword>
<keyword id="KW-1048">Host nucleus</keyword>
<keyword id="KW-0945">Host-virus interaction</keyword>
<keyword id="KW-0426">Late protein</keyword>
<keyword id="KW-1185">Reference proteome</keyword>
<keyword id="KW-1233">Viral attachment to host adhesion receptor</keyword>
<keyword id="KW-1161">Viral attachment to host cell</keyword>
<keyword id="KW-0946">Virion</keyword>
<keyword id="KW-1160">Virus entry into host cell</keyword>
<name>SPIK1_ADEG1</name>
<organism>
    <name type="scientific">Fowl adenovirus A serotype 1 (strain CELO / Phelps)</name>
    <name type="common">FAdV-1</name>
    <name type="synonym">Avian adenovirus gal1 (strain Phelps)</name>
    <dbReference type="NCBI Taxonomy" id="10553"/>
    <lineage>
        <taxon>Viruses</taxon>
        <taxon>Varidnaviria</taxon>
        <taxon>Bamfordvirae</taxon>
        <taxon>Preplasmiviricota</taxon>
        <taxon>Tectiliviricetes</taxon>
        <taxon>Rowavirales</taxon>
        <taxon>Adenoviridae</taxon>
        <taxon>Aviadenovirus</taxon>
        <taxon>Fowl aviadenovirus A</taxon>
    </lineage>
</organism>
<reference key="1">
    <citation type="journal article" date="1996" name="J. Virol.">
        <title>The complete DNA sequence and genomic organization of the avian adenovirus CELO.</title>
        <authorList>
            <person name="Chiocca S."/>
            <person name="Kurzbauer R."/>
            <person name="Schaffner G."/>
            <person name="Baker A."/>
            <person name="Mautner V."/>
            <person name="Cotten M."/>
        </authorList>
    </citation>
    <scope>NUCLEOTIDE SEQUENCE [LARGE SCALE GENOMIC DNA]</scope>
</reference>
<accession>Q64761</accession>
<comment type="function">
    <text evidence="1">Forms spikes that protrude from each vertex of the icosahedral capsid. Interacts with host receptor to provide virion initial attachment to target cell. Fiber proteins are shed during virus entry, when virus is still at the cell surface (By similarity).</text>
</comment>
<comment type="subunit">
    <text evidence="1">Homotrimer. Interacts (via N-terminal tail region) with pentons (By similarity).</text>
</comment>
<comment type="subcellular location">
    <subcellularLocation>
        <location evidence="1">Virion</location>
    </subcellularLocation>
    <subcellularLocation>
        <location evidence="1">Host nucleus</location>
    </subcellularLocation>
    <text evidence="1">Anchored to the pentons, protrudes from the virion surface.</text>
</comment>
<comment type="induction">
    <text>Expressed in the late phase of the viral replicative cycle.</text>
</comment>
<comment type="domain">
    <text evidence="1">The tail region anchors the fiber to penton base capsomers, whereas the shaft, built from several repeated motifs, allows the knob to protrude from the virion.</text>
</comment>
<comment type="miscellaneous">
    <text evidence="1">All late proteins expressed from the major late promoter are produced by alternative splicing and alternative polyadenylation of the same gene giving rise to non-overlapping ORFs. A leader sequence is present in the N-terminus of all these mRNAs and is recognized by the viral shutoff protein to provide expression although conventional translation via ribosome scanning from the cap has been shut off in the host cell (By similarity).</text>
</comment>
<comment type="similarity">
    <text evidence="2">Belongs to the adenoviridae fiber family.</text>
</comment>
<sequence length="710" mass="72928">MTSPLTLSQRALALKTDSTLTLNTQGQLGVSLTPGDGLVLNTNGLSINADPQTLAFNNSGALEVNLDPDGPWSKTATGIDLRLDPTTLEVDNWELGVKLDPDEAIDSGPDGLCLNLDETLLLATNSTSGKTELGVHLNTSGPITADDQGIDLDVDPNTMQVNTGPSGGMLAVKLKSGGGLTADPDGISVTATVAPPSISATAPLTYTSGTIALTTDTQTMQVNSNQLAVKLKTGGGLTADADGISVSVAPTPTISASPPLTYTNGQIGLSIGDQSLQVSSGQLQVKLKSQGGIQQSTQGLGVAVDQTLKIVSNTLEVNTDPSGPLTSGNNGLSLAAVTPLAVSSAGVTLNYQSPLTVTSNSLGLSIAAPLQAGAQGLTVNTMEPLSASAQGIQLHYGQGFQVVAGTLQLLTNPPIVVSSRGFTLLYTPAFTVSNNMLGLNVDGTDCVAISSAGLQIRKEAPLYVTSGSTPALALKYSSDFTITNGALALANSGGGGSSTPEVATYHCGDNLLESYDIFASLPNTNAAKVAAYCRLAAAGGVVSGTIQVTSYAGRWPKVGNSVTDGIKFAIVVSPPMDKDPRSNLSQWLGATVFPAGATTALFSPNPYGSLNTITTLPSIASDWYVPESNLVTYTKIHFKPTGSQQLQLASGELVVAAAKSPVQTTKYELIYLGFTLKQNSSGTNFFDPNASSDLSFLTPPIPFTYLGYYQ</sequence>
<proteinExistence type="evidence at protein level"/>
<evidence type="ECO:0000250" key="1"/>
<evidence type="ECO:0000305" key="2"/>
<evidence type="ECO:0007829" key="3">
    <source>
        <dbReference type="PDB" id="2IUM"/>
    </source>
</evidence>
<evidence type="ECO:0007829" key="4">
    <source>
        <dbReference type="PDB" id="2IUN"/>
    </source>
</evidence>
<dbReference type="EMBL" id="U46933">
    <property type="protein sequence ID" value="AAC54917.1"/>
    <property type="molecule type" value="Genomic_DNA"/>
</dbReference>
<dbReference type="RefSeq" id="NP_043891.1">
    <property type="nucleotide sequence ID" value="NC_001720.1"/>
</dbReference>
<dbReference type="PDB" id="2IUM">
    <property type="method" value="X-ray"/>
    <property type="resolution" value="1.60 A"/>
    <property type="chains" value="A/B/C=496-710"/>
</dbReference>
<dbReference type="PDB" id="2IUN">
    <property type="method" value="X-ray"/>
    <property type="resolution" value="2.80 A"/>
    <property type="chains" value="A/B/C/D/E/F=496-710"/>
</dbReference>
<dbReference type="PDBsum" id="2IUM"/>
<dbReference type="PDBsum" id="2IUN"/>
<dbReference type="SMR" id="Q64761"/>
<dbReference type="GeneID" id="1476564"/>
<dbReference type="KEGG" id="vg:1476564"/>
<dbReference type="EvolutionaryTrace" id="Q64761"/>
<dbReference type="Proteomes" id="UP000001594">
    <property type="component" value="Segment"/>
</dbReference>
<dbReference type="GO" id="GO:0042025">
    <property type="term" value="C:host cell nucleus"/>
    <property type="evidence" value="ECO:0007669"/>
    <property type="project" value="UniProtKB-SubCell"/>
</dbReference>
<dbReference type="GO" id="GO:0019028">
    <property type="term" value="C:viral capsid"/>
    <property type="evidence" value="ECO:0007669"/>
    <property type="project" value="UniProtKB-KW"/>
</dbReference>
<dbReference type="GO" id="GO:0098671">
    <property type="term" value="P:adhesion receptor-mediated virion attachment to host cell"/>
    <property type="evidence" value="ECO:0007669"/>
    <property type="project" value="UniProtKB-KW"/>
</dbReference>
<dbReference type="GO" id="GO:0046718">
    <property type="term" value="P:symbiont entry into host cell"/>
    <property type="evidence" value="ECO:0007669"/>
    <property type="project" value="UniProtKB-KW"/>
</dbReference>
<dbReference type="Gene3D" id="6.20.10.20">
    <property type="match status" value="2"/>
</dbReference>
<dbReference type="Gene3D" id="2.60.90.30">
    <property type="entry name" value="Fiber protein 1, C-terminal domain"/>
    <property type="match status" value="1"/>
</dbReference>
<dbReference type="Gene3D" id="2.10.25.20">
    <property type="entry name" value="reovirus attachment protein sigma1, domain 1"/>
    <property type="match status" value="1"/>
</dbReference>
<dbReference type="InterPro" id="IPR000939">
    <property type="entry name" value="Adenobir_fibre_prot_rpt/shaft"/>
</dbReference>
<dbReference type="InterPro" id="IPR031822">
    <property type="entry name" value="AdHead_fibreRBD"/>
</dbReference>
<dbReference type="InterPro" id="IPR009013">
    <property type="entry name" value="Attachment_protein_shaft_sf"/>
</dbReference>
<dbReference type="InterPro" id="IPR010537">
    <property type="entry name" value="Avian_adenovirus_fibre_N"/>
</dbReference>
<dbReference type="InterPro" id="IPR038486">
    <property type="entry name" value="Fiber_prot_C_sf"/>
</dbReference>
<dbReference type="Pfam" id="PF00608">
    <property type="entry name" value="Adeno_shaft"/>
    <property type="match status" value="2"/>
</dbReference>
<dbReference type="Pfam" id="PF16812">
    <property type="entry name" value="AdHead_fibreRBD"/>
    <property type="match status" value="1"/>
</dbReference>
<dbReference type="Pfam" id="PF06536">
    <property type="entry name" value="Av_adeno_fibre"/>
    <property type="match status" value="6"/>
</dbReference>
<dbReference type="SUPFAM" id="SSF51225">
    <property type="entry name" value="Fibre shaft of virus attachment proteins"/>
    <property type="match status" value="2"/>
</dbReference>
<protein>
    <recommendedName>
        <fullName>Fiber protein 1</fullName>
    </recommendedName>
</protein>
<feature type="chain" id="PRO_0000221808" description="Fiber protein 1">
    <location>
        <begin position="1"/>
        <end position="710"/>
    </location>
</feature>
<feature type="strand" evidence="3">
    <location>
        <begin position="502"/>
        <end position="508"/>
    </location>
</feature>
<feature type="strand" evidence="3">
    <location>
        <begin position="517"/>
        <end position="521"/>
    </location>
</feature>
<feature type="turn" evidence="3">
    <location>
        <begin position="522"/>
        <end position="524"/>
    </location>
</feature>
<feature type="strand" evidence="3">
    <location>
        <begin position="525"/>
        <end position="538"/>
    </location>
</feature>
<feature type="strand" evidence="3">
    <location>
        <begin position="541"/>
        <end position="551"/>
    </location>
</feature>
<feature type="helix" evidence="3">
    <location>
        <begin position="552"/>
        <end position="554"/>
    </location>
</feature>
<feature type="strand" evidence="3">
    <location>
        <begin position="557"/>
        <end position="559"/>
    </location>
</feature>
<feature type="helix" evidence="3">
    <location>
        <begin position="561"/>
        <end position="564"/>
    </location>
</feature>
<feature type="strand" evidence="3">
    <location>
        <begin position="566"/>
        <end position="572"/>
    </location>
</feature>
<feature type="helix" evidence="3">
    <location>
        <begin position="574"/>
        <end position="577"/>
    </location>
</feature>
<feature type="helix" evidence="3">
    <location>
        <begin position="580"/>
        <end position="582"/>
    </location>
</feature>
<feature type="strand" evidence="3">
    <location>
        <begin position="590"/>
        <end position="594"/>
    </location>
</feature>
<feature type="helix" evidence="3">
    <location>
        <begin position="599"/>
        <end position="602"/>
    </location>
</feature>
<feature type="helix" evidence="3">
    <location>
        <begin position="606"/>
        <end position="609"/>
    </location>
</feature>
<feature type="turn" evidence="3">
    <location>
        <begin position="610"/>
        <end position="612"/>
    </location>
</feature>
<feature type="helix" evidence="3">
    <location>
        <begin position="627"/>
        <end position="629"/>
    </location>
</feature>
<feature type="strand" evidence="3">
    <location>
        <begin position="633"/>
        <end position="639"/>
    </location>
</feature>
<feature type="helix" evidence="3">
    <location>
        <begin position="644"/>
        <end position="646"/>
    </location>
</feature>
<feature type="strand" evidence="3">
    <location>
        <begin position="648"/>
        <end position="659"/>
    </location>
</feature>
<feature type="strand" evidence="4">
    <location>
        <begin position="664"/>
        <end position="666"/>
    </location>
</feature>
<feature type="strand" evidence="3">
    <location>
        <begin position="669"/>
        <end position="678"/>
    </location>
</feature>
<feature type="strand" evidence="3">
    <location>
        <begin position="695"/>
        <end position="697"/>
    </location>
</feature>
<feature type="strand" evidence="3">
    <location>
        <begin position="701"/>
        <end position="707"/>
    </location>
</feature>
<organismHost>
    <name type="scientific">Galliformes</name>
    <dbReference type="NCBI Taxonomy" id="8976"/>
</organismHost>